<evidence type="ECO:0000250" key="1"/>
<evidence type="ECO:0000255" key="2"/>
<evidence type="ECO:0000305" key="3"/>
<keyword id="KW-1015">Disulfide bond</keyword>
<keyword id="KW-0372">Hormone</keyword>
<keyword id="KW-1185">Reference proteome</keyword>
<keyword id="KW-0964">Secreted</keyword>
<keyword id="KW-0732">Signal</keyword>
<reference key="1">
    <citation type="journal article" date="2001" name="Proc. Natl. Acad. Sci. U.S.A.">
        <title>A family of tissue-specific resistin-like molecules.</title>
        <authorList>
            <person name="Steppan C.M."/>
            <person name="Brown E.J."/>
            <person name="Wright C.M."/>
            <person name="Bhat S."/>
            <person name="Banerjee R.R."/>
            <person name="Dai C.Y."/>
            <person name="Enders G.H."/>
            <person name="Silberg D.G."/>
            <person name="Wen X."/>
            <person name="Wu G.D."/>
            <person name="Lazar M.A."/>
        </authorList>
    </citation>
    <scope>NUCLEOTIDE SEQUENCE [MRNA]</scope>
</reference>
<proteinExistence type="evidence at transcript level"/>
<protein>
    <recommendedName>
        <fullName>Resistin-like alpha</fullName>
    </recommendedName>
    <alternativeName>
        <fullName>Cysteine-rich secreted protein FIZZ1</fullName>
    </alternativeName>
    <alternativeName>
        <fullName>RELMalpha</fullName>
    </alternativeName>
</protein>
<organism>
    <name type="scientific">Rattus norvegicus</name>
    <name type="common">Rat</name>
    <dbReference type="NCBI Taxonomy" id="10116"/>
    <lineage>
        <taxon>Eukaryota</taxon>
        <taxon>Metazoa</taxon>
        <taxon>Chordata</taxon>
        <taxon>Craniata</taxon>
        <taxon>Vertebrata</taxon>
        <taxon>Euteleostomi</taxon>
        <taxon>Mammalia</taxon>
        <taxon>Eutheria</taxon>
        <taxon>Euarchontoglires</taxon>
        <taxon>Glires</taxon>
        <taxon>Rodentia</taxon>
        <taxon>Myomorpha</taxon>
        <taxon>Muroidea</taxon>
        <taxon>Muridae</taxon>
        <taxon>Murinae</taxon>
        <taxon>Rattus</taxon>
    </lineage>
</organism>
<accession>Q99P85</accession>
<gene>
    <name type="primary">Retnla</name>
    <name type="synonym">Fizz1</name>
</gene>
<feature type="signal peptide" evidence="2">
    <location>
        <begin position="1"/>
        <end position="23"/>
    </location>
</feature>
<feature type="chain" id="PRO_0000030344" description="Resistin-like alpha">
    <location>
        <begin position="24"/>
        <end position="111"/>
    </location>
</feature>
<feature type="disulfide bond" evidence="1">
    <location>
        <begin position="55"/>
        <end position="108"/>
    </location>
</feature>
<feature type="disulfide bond" evidence="1">
    <location>
        <begin position="67"/>
        <end position="107"/>
    </location>
</feature>
<feature type="disulfide bond" evidence="1">
    <location>
        <begin position="76"/>
        <end position="93"/>
    </location>
</feature>
<feature type="disulfide bond" evidence="1">
    <location>
        <begin position="78"/>
        <end position="95"/>
    </location>
</feature>
<feature type="disulfide bond" evidence="1">
    <location>
        <begin position="82"/>
        <end position="97"/>
    </location>
</feature>
<sequence length="111" mass="12076">MKTATCSLLICVFLLQLMVPVNTDGTLDIIGKKKVKELLAHQDNYPSAVRKTLSCTNVKSMSKWASCPAGMTATGCSCGFACGSWEIQNENICNCLCLIVDWAYARCCQLS</sequence>
<comment type="function">
    <text evidence="1">Probable hormone. Plays a role in pulmonary vascular remodeling (By similarity).</text>
</comment>
<comment type="subunit">
    <text evidence="1">Monomer.</text>
</comment>
<comment type="subcellular location">
    <subcellularLocation>
        <location>Secreted</location>
    </subcellularLocation>
</comment>
<comment type="tissue specificity">
    <text>Highest levels in adipose tissue.</text>
</comment>
<comment type="similarity">
    <text evidence="3">Belongs to the resistin/FIZZ family.</text>
</comment>
<name>RETNA_RAT</name>
<dbReference type="EMBL" id="AF323085">
    <property type="protein sequence ID" value="AAG59828.1"/>
    <property type="molecule type" value="mRNA"/>
</dbReference>
<dbReference type="RefSeq" id="NP_445785.1">
    <property type="nucleotide sequence ID" value="NM_053333.3"/>
</dbReference>
<dbReference type="RefSeq" id="XP_006248345.1">
    <property type="nucleotide sequence ID" value="XM_006248283.3"/>
</dbReference>
<dbReference type="SMR" id="Q99P85"/>
<dbReference type="STRING" id="10116.ENSRNOP00000002676"/>
<dbReference type="PaxDb" id="10116-ENSRNOP00000002676"/>
<dbReference type="GeneID" id="81712"/>
<dbReference type="KEGG" id="rno:81712"/>
<dbReference type="UCSC" id="RGD:68349">
    <property type="organism name" value="rat"/>
</dbReference>
<dbReference type="AGR" id="RGD:68349"/>
<dbReference type="CTD" id="57262"/>
<dbReference type="RGD" id="68349">
    <property type="gene designation" value="Retnla"/>
</dbReference>
<dbReference type="VEuPathDB" id="HostDB:ENSRNOG00000001955"/>
<dbReference type="eggNOG" id="ENOG502RTZZ">
    <property type="taxonomic scope" value="Eukaryota"/>
</dbReference>
<dbReference type="HOGENOM" id="CLU_150117_0_0_1"/>
<dbReference type="InParanoid" id="Q99P85"/>
<dbReference type="OrthoDB" id="10065422at2759"/>
<dbReference type="PhylomeDB" id="Q99P85"/>
<dbReference type="TreeFam" id="TF337024"/>
<dbReference type="PRO" id="PR:Q99P85"/>
<dbReference type="Proteomes" id="UP000002494">
    <property type="component" value="Chromosome 11"/>
</dbReference>
<dbReference type="Bgee" id="ENSRNOG00000001955">
    <property type="expression patterns" value="Expressed in lung and 6 other cell types or tissues"/>
</dbReference>
<dbReference type="GO" id="GO:0005615">
    <property type="term" value="C:extracellular space"/>
    <property type="evidence" value="ECO:0000318"/>
    <property type="project" value="GO_Central"/>
</dbReference>
<dbReference type="GO" id="GO:0005179">
    <property type="term" value="F:hormone activity"/>
    <property type="evidence" value="ECO:0007669"/>
    <property type="project" value="UniProtKB-KW"/>
</dbReference>
<dbReference type="CDD" id="cd16333">
    <property type="entry name" value="RELM"/>
    <property type="match status" value="1"/>
</dbReference>
<dbReference type="Gene3D" id="2.60.40.4230">
    <property type="entry name" value="Resistin head domain"/>
    <property type="match status" value="1"/>
</dbReference>
<dbReference type="InterPro" id="IPR009714">
    <property type="entry name" value="RELM"/>
</dbReference>
<dbReference type="InterPro" id="IPR036262">
    <property type="entry name" value="Resistin-like_sf"/>
</dbReference>
<dbReference type="PANTHER" id="PTHR21101">
    <property type="entry name" value="RESISTIN"/>
    <property type="match status" value="1"/>
</dbReference>
<dbReference type="PANTHER" id="PTHR21101:SF5">
    <property type="entry name" value="RESISTIN-LIKE ALPHA"/>
    <property type="match status" value="1"/>
</dbReference>
<dbReference type="Pfam" id="PF06954">
    <property type="entry name" value="Resistin"/>
    <property type="match status" value="1"/>
</dbReference>
<dbReference type="SUPFAM" id="SSF111423">
    <property type="entry name" value="Resistin"/>
    <property type="match status" value="1"/>
</dbReference>